<gene>
    <name type="primary">Il2</name>
    <name type="synonym">Il-2</name>
</gene>
<proteinExistence type="evidence at transcript level"/>
<accession>P17108</accession>
<feature type="signal peptide" evidence="1">
    <location>
        <begin position="1"/>
        <end position="20"/>
    </location>
</feature>
<feature type="chain" id="PRO_0000015500" description="Interleukin-2">
    <location>
        <begin position="21"/>
        <end position="155"/>
    </location>
</feature>
<feature type="glycosylation site" description="O-linked (GalNAc...) threonine" evidence="1">
    <location>
        <position position="23"/>
    </location>
</feature>
<feature type="disulfide bond" evidence="2">
    <location>
        <begin position="78"/>
        <end position="126"/>
    </location>
</feature>
<keyword id="KW-1064">Adaptive immunity</keyword>
<keyword id="KW-0202">Cytokine</keyword>
<keyword id="KW-1015">Disulfide bond</keyword>
<keyword id="KW-0325">Glycoprotein</keyword>
<keyword id="KW-0339">Growth factor</keyword>
<keyword id="KW-0391">Immunity</keyword>
<keyword id="KW-1185">Reference proteome</keyword>
<keyword id="KW-0964">Secreted</keyword>
<keyword id="KW-0732">Signal</keyword>
<evidence type="ECO:0000250" key="1"/>
<evidence type="ECO:0000250" key="2">
    <source>
        <dbReference type="UniProtKB" id="P60568"/>
    </source>
</evidence>
<evidence type="ECO:0000305" key="3"/>
<dbReference type="EMBL" id="M22899">
    <property type="protein sequence ID" value="AAA41427.1"/>
    <property type="molecule type" value="mRNA"/>
</dbReference>
<dbReference type="PIR" id="A45882">
    <property type="entry name" value="A31278"/>
</dbReference>
<dbReference type="RefSeq" id="NP_446288.1">
    <property type="nucleotide sequence ID" value="NM_053836.1"/>
</dbReference>
<dbReference type="SMR" id="P17108"/>
<dbReference type="FunCoup" id="P17108">
    <property type="interactions" value="136"/>
</dbReference>
<dbReference type="STRING" id="10116.ENSRNOP00000023327"/>
<dbReference type="GlyCosmos" id="P17108">
    <property type="glycosylation" value="1 site, No reported glycans"/>
</dbReference>
<dbReference type="GlyGen" id="P17108">
    <property type="glycosylation" value="1 site"/>
</dbReference>
<dbReference type="PhosphoSitePlus" id="P17108"/>
<dbReference type="PaxDb" id="10116-ENSRNOP00000023327"/>
<dbReference type="Ensembl" id="ENSRNOT00000023327.3">
    <property type="protein sequence ID" value="ENSRNOP00000023327.1"/>
    <property type="gene ID" value="ENSRNOG00000017348.3"/>
</dbReference>
<dbReference type="GeneID" id="116562"/>
<dbReference type="KEGG" id="rno:116562"/>
<dbReference type="UCSC" id="RGD:620047">
    <property type="organism name" value="rat"/>
</dbReference>
<dbReference type="AGR" id="RGD:620047"/>
<dbReference type="CTD" id="3558"/>
<dbReference type="RGD" id="620047">
    <property type="gene designation" value="Il2"/>
</dbReference>
<dbReference type="eggNOG" id="ENOG502RVR5">
    <property type="taxonomic scope" value="Eukaryota"/>
</dbReference>
<dbReference type="GeneTree" id="ENSGT00390000003555"/>
<dbReference type="HOGENOM" id="CLU_124210_0_0_1"/>
<dbReference type="InParanoid" id="P17108"/>
<dbReference type="OMA" id="NGVNNYE"/>
<dbReference type="OrthoDB" id="9450228at2759"/>
<dbReference type="PhylomeDB" id="P17108"/>
<dbReference type="TreeFam" id="TF338200"/>
<dbReference type="Reactome" id="R-RNO-5673001">
    <property type="pathway name" value="RAF/MAP kinase cascade"/>
</dbReference>
<dbReference type="Reactome" id="R-RNO-9020558">
    <property type="pathway name" value="Interleukin-2 signaling"/>
</dbReference>
<dbReference type="Reactome" id="R-RNO-912526">
    <property type="pathway name" value="Interleukin receptor SHC signaling"/>
</dbReference>
<dbReference type="PRO" id="PR:P17108"/>
<dbReference type="Proteomes" id="UP000002494">
    <property type="component" value="Chromosome 2"/>
</dbReference>
<dbReference type="Bgee" id="ENSRNOG00000017348">
    <property type="expression patterns" value="Expressed in ileum and 5 other cell types or tissues"/>
</dbReference>
<dbReference type="GO" id="GO:0005615">
    <property type="term" value="C:extracellular space"/>
    <property type="evidence" value="ECO:0000314"/>
    <property type="project" value="RGD"/>
</dbReference>
<dbReference type="GO" id="GO:0030246">
    <property type="term" value="F:carbohydrate binding"/>
    <property type="evidence" value="ECO:0000314"/>
    <property type="project" value="RGD"/>
</dbReference>
<dbReference type="GO" id="GO:0005125">
    <property type="term" value="F:cytokine activity"/>
    <property type="evidence" value="ECO:0000314"/>
    <property type="project" value="RGD"/>
</dbReference>
<dbReference type="GO" id="GO:0043208">
    <property type="term" value="F:glycosphingolipid binding"/>
    <property type="evidence" value="ECO:0000314"/>
    <property type="project" value="RGD"/>
</dbReference>
<dbReference type="GO" id="GO:0008083">
    <property type="term" value="F:growth factor activity"/>
    <property type="evidence" value="ECO:0007669"/>
    <property type="project" value="UniProtKB-KW"/>
</dbReference>
<dbReference type="GO" id="GO:0005134">
    <property type="term" value="F:interleukin-2 receptor binding"/>
    <property type="evidence" value="ECO:0000315"/>
    <property type="project" value="RGD"/>
</dbReference>
<dbReference type="GO" id="GO:0031851">
    <property type="term" value="F:kappa-type opioid receptor binding"/>
    <property type="evidence" value="ECO:0000315"/>
    <property type="project" value="RGD"/>
</dbReference>
<dbReference type="GO" id="GO:0050798">
    <property type="term" value="P:activated T cell proliferation"/>
    <property type="evidence" value="ECO:0000266"/>
    <property type="project" value="RGD"/>
</dbReference>
<dbReference type="GO" id="GO:0002250">
    <property type="term" value="P:adaptive immune response"/>
    <property type="evidence" value="ECO:0007669"/>
    <property type="project" value="UniProtKB-KW"/>
</dbReference>
<dbReference type="GO" id="GO:0097696">
    <property type="term" value="P:cell surface receptor signaling pathway via STAT"/>
    <property type="evidence" value="ECO:0000266"/>
    <property type="project" value="RGD"/>
</dbReference>
<dbReference type="GO" id="GO:0097192">
    <property type="term" value="P:extrinsic apoptotic signaling pathway in absence of ligand"/>
    <property type="evidence" value="ECO:0000266"/>
    <property type="project" value="RGD"/>
</dbReference>
<dbReference type="GO" id="GO:0007186">
    <property type="term" value="P:G protein-coupled receptor signaling pathway"/>
    <property type="evidence" value="ECO:0000315"/>
    <property type="project" value="RGD"/>
</dbReference>
<dbReference type="GO" id="GO:0010467">
    <property type="term" value="P:gene expression"/>
    <property type="evidence" value="ECO:0000266"/>
    <property type="project" value="RGD"/>
</dbReference>
<dbReference type="GO" id="GO:0038110">
    <property type="term" value="P:interleukin-2-mediated signaling pathway"/>
    <property type="evidence" value="ECO:0000266"/>
    <property type="project" value="RGD"/>
</dbReference>
<dbReference type="GO" id="GO:0002366">
    <property type="term" value="P:leukocyte activation involved in immune response"/>
    <property type="evidence" value="ECO:0000266"/>
    <property type="project" value="RGD"/>
</dbReference>
<dbReference type="GO" id="GO:0046651">
    <property type="term" value="P:lymphocyte proliferation"/>
    <property type="evidence" value="ECO:0000266"/>
    <property type="project" value="RGD"/>
</dbReference>
<dbReference type="GO" id="GO:0002903">
    <property type="term" value="P:negative regulation of B cell apoptotic process"/>
    <property type="evidence" value="ECO:0000266"/>
    <property type="project" value="RGD"/>
</dbReference>
<dbReference type="GO" id="GO:0050728">
    <property type="term" value="P:negative regulation of inflammatory response"/>
    <property type="evidence" value="ECO:0000266"/>
    <property type="project" value="RGD"/>
</dbReference>
<dbReference type="GO" id="GO:0050672">
    <property type="term" value="P:negative regulation of lymphocyte proliferation"/>
    <property type="evidence" value="ECO:0000266"/>
    <property type="project" value="RGD"/>
</dbReference>
<dbReference type="GO" id="GO:2000320">
    <property type="term" value="P:negative regulation of T-helper 17 cell differentiation"/>
    <property type="evidence" value="ECO:0000266"/>
    <property type="project" value="RGD"/>
</dbReference>
<dbReference type="GO" id="GO:0007200">
    <property type="term" value="P:phospholipase C-activating G protein-coupled receptor signaling pathway"/>
    <property type="evidence" value="ECO:0000315"/>
    <property type="project" value="RGD"/>
</dbReference>
<dbReference type="GO" id="GO:0042104">
    <property type="term" value="P:positive regulation of activated T cell proliferation"/>
    <property type="evidence" value="ECO:0000266"/>
    <property type="project" value="RGD"/>
</dbReference>
<dbReference type="GO" id="GO:0030890">
    <property type="term" value="P:positive regulation of B cell proliferation"/>
    <property type="evidence" value="ECO:0000266"/>
    <property type="project" value="RGD"/>
</dbReference>
<dbReference type="GO" id="GO:0007204">
    <property type="term" value="P:positive regulation of cytosolic calcium ion concentration"/>
    <property type="evidence" value="ECO:0000314"/>
    <property type="project" value="RGD"/>
</dbReference>
<dbReference type="GO" id="GO:0060999">
    <property type="term" value="P:positive regulation of dendritic spine development"/>
    <property type="evidence" value="ECO:0000314"/>
    <property type="project" value="RGD"/>
</dbReference>
<dbReference type="GO" id="GO:0002639">
    <property type="term" value="P:positive regulation of immunoglobulin production"/>
    <property type="evidence" value="ECO:0000266"/>
    <property type="project" value="RGD"/>
</dbReference>
<dbReference type="GO" id="GO:0032740">
    <property type="term" value="P:positive regulation of interleukin-17 production"/>
    <property type="evidence" value="ECO:0000266"/>
    <property type="project" value="RGD"/>
</dbReference>
<dbReference type="GO" id="GO:0048304">
    <property type="term" value="P:positive regulation of isotype switching to IgG isotypes"/>
    <property type="evidence" value="ECO:0000266"/>
    <property type="project" value="RGD"/>
</dbReference>
<dbReference type="GO" id="GO:1900100">
    <property type="term" value="P:positive regulation of plasma cell differentiation"/>
    <property type="evidence" value="ECO:0000266"/>
    <property type="project" value="RGD"/>
</dbReference>
<dbReference type="GO" id="GO:0045591">
    <property type="term" value="P:positive regulation of regulatory T cell differentiation"/>
    <property type="evidence" value="ECO:0000314"/>
    <property type="project" value="RGD"/>
</dbReference>
<dbReference type="GO" id="GO:0045582">
    <property type="term" value="P:positive regulation of T cell differentiation"/>
    <property type="evidence" value="ECO:0000314"/>
    <property type="project" value="RGD"/>
</dbReference>
<dbReference type="GO" id="GO:0042102">
    <property type="term" value="P:positive regulation of T cell proliferation"/>
    <property type="evidence" value="ECO:0000314"/>
    <property type="project" value="RGD"/>
</dbReference>
<dbReference type="GO" id="GO:0045944">
    <property type="term" value="P:positive regulation of transcription by RNA polymerase II"/>
    <property type="evidence" value="ECO:0000266"/>
    <property type="project" value="RGD"/>
</dbReference>
<dbReference type="GO" id="GO:0032729">
    <property type="term" value="P:positive regulation of type II interferon production"/>
    <property type="evidence" value="ECO:0000266"/>
    <property type="project" value="RGD"/>
</dbReference>
<dbReference type="GO" id="GO:2000561">
    <property type="term" value="P:regulation of CD4-positive, alpha-beta T cell proliferation"/>
    <property type="evidence" value="ECO:0000266"/>
    <property type="project" value="RGD"/>
</dbReference>
<dbReference type="GO" id="GO:0046013">
    <property type="term" value="P:regulation of T cell homeostatic proliferation"/>
    <property type="evidence" value="ECO:0000266"/>
    <property type="project" value="RGD"/>
</dbReference>
<dbReference type="GO" id="GO:0045471">
    <property type="term" value="P:response to ethanol"/>
    <property type="evidence" value="ECO:0000314"/>
    <property type="project" value="RGD"/>
</dbReference>
<dbReference type="GO" id="GO:1901327">
    <property type="term" value="P:response to tacrolimus"/>
    <property type="evidence" value="ECO:0000270"/>
    <property type="project" value="RGD"/>
</dbReference>
<dbReference type="GO" id="GO:0042098">
    <property type="term" value="P:T cell proliferation"/>
    <property type="evidence" value="ECO:0000266"/>
    <property type="project" value="RGD"/>
</dbReference>
<dbReference type="GO" id="GO:0006366">
    <property type="term" value="P:transcription by RNA polymerase II"/>
    <property type="evidence" value="ECO:0000266"/>
    <property type="project" value="RGD"/>
</dbReference>
<dbReference type="FunFam" id="1.20.1250.10:FF:000025">
    <property type="entry name" value="Interleukin-2"/>
    <property type="match status" value="1"/>
</dbReference>
<dbReference type="Gene3D" id="1.20.1250.10">
    <property type="match status" value="1"/>
</dbReference>
<dbReference type="InterPro" id="IPR009079">
    <property type="entry name" value="4_helix_cytokine-like_core"/>
</dbReference>
<dbReference type="InterPro" id="IPR000779">
    <property type="entry name" value="IL-2"/>
</dbReference>
<dbReference type="InterPro" id="IPR030477">
    <property type="entry name" value="IL-2_CS"/>
</dbReference>
<dbReference type="PANTHER" id="PTHR48487">
    <property type="entry name" value="INTERLEUKIN-2"/>
    <property type="match status" value="1"/>
</dbReference>
<dbReference type="PANTHER" id="PTHR48487:SF1">
    <property type="entry name" value="INTERLEUKIN-2"/>
    <property type="match status" value="1"/>
</dbReference>
<dbReference type="Pfam" id="PF00715">
    <property type="entry name" value="IL2"/>
    <property type="match status" value="1"/>
</dbReference>
<dbReference type="PRINTS" id="PR00265">
    <property type="entry name" value="INTERLEUKIN2"/>
</dbReference>
<dbReference type="SMART" id="SM00189">
    <property type="entry name" value="IL2"/>
    <property type="match status" value="1"/>
</dbReference>
<dbReference type="SUPFAM" id="SSF47266">
    <property type="entry name" value="4-helical cytokines"/>
    <property type="match status" value="1"/>
</dbReference>
<dbReference type="PROSITE" id="PS00424">
    <property type="entry name" value="INTERLEUKIN_2"/>
    <property type="match status" value="1"/>
</dbReference>
<reference key="1">
    <citation type="journal article" date="1989" name="Immunogenetics">
        <title>Sequence of rat interleukin 2 and anomalous binding of a mouse interleukin 2 cDNA probe to rat MHC class II-associated invariant chain mRNA.</title>
        <authorList>
            <person name="McKnight A.J."/>
            <person name="Mason D.W."/>
            <person name="Barclay A.N."/>
        </authorList>
    </citation>
    <scope>NUCLEOTIDE SEQUENCE [MRNA]</scope>
</reference>
<sequence>MYSMQLASCVALTLVLLVNSAPTSSPAKETQQHLEQLLLDLQVLLRGIDNYKNLKLPMMLTFKFYLPKQATELKHLQCLENELGALQRVLDLTQSKSFHLEDAGNFISNIRVTVVKLKGSENKFECQFDDEPATVVEFLRRWIAICQSIISTMTQ</sequence>
<organism>
    <name type="scientific">Rattus norvegicus</name>
    <name type="common">Rat</name>
    <dbReference type="NCBI Taxonomy" id="10116"/>
    <lineage>
        <taxon>Eukaryota</taxon>
        <taxon>Metazoa</taxon>
        <taxon>Chordata</taxon>
        <taxon>Craniata</taxon>
        <taxon>Vertebrata</taxon>
        <taxon>Euteleostomi</taxon>
        <taxon>Mammalia</taxon>
        <taxon>Eutheria</taxon>
        <taxon>Euarchontoglires</taxon>
        <taxon>Glires</taxon>
        <taxon>Rodentia</taxon>
        <taxon>Myomorpha</taxon>
        <taxon>Muroidea</taxon>
        <taxon>Muridae</taxon>
        <taxon>Murinae</taxon>
        <taxon>Rattus</taxon>
    </lineage>
</organism>
<protein>
    <recommendedName>
        <fullName>Interleukin-2</fullName>
        <shortName>IL-2</shortName>
    </recommendedName>
    <alternativeName>
        <fullName>T-cell growth factor</fullName>
        <shortName>TCGF</shortName>
    </alternativeName>
</protein>
<name>IL2_RAT</name>
<comment type="function">
    <text evidence="2">Cytokine produced by activated CD4-positive helper T-cells and to a lesser extend activated CD8-positive T-cells and natural killer (NK) cells that plays pivotal roles in the immune response and tolerance. Binds to a receptor complex composed of either the high-affinity trimeric IL-2R (IL2RA/CD25, IL2RB/CD122 and IL2RG/CD132) or the low-affinity dimeric IL-2R (IL2RB and IL2RG). Interaction with the receptor leads to oligomerization and conformation changes in the IL-2R subunits resulting in downstream signaling starting with phosphorylation of JAK1 and JAK3. In turn, JAK1 and JAK3 phosphorylate the receptor to form a docking site leading to the phosphorylation of several substrates including STAT5. This process leads to activation of several pathways including STAT, phosphoinositide-3-kinase/PI3K and mitogen-activated protein kinase/MAPK pathways. Functions as a T-cell growth factor and can increase NK-cell cytolytic activity as well. Promotes strong proliferation of activated B-cells and subsequently immunoglobulin production. Plays a pivotal role in regulating the adaptive immune system by controlling the survival and proliferation of regulatory T-cells, which are required for the maintenance of immune tolerance. Moreover, participates in the differentiation and homeostasis of effector T-cell subsets, including Th1, Th2, Th17 as well as memory CD8-positive T-cells.</text>
</comment>
<comment type="subcellular location">
    <subcellularLocation>
        <location>Secreted</location>
    </subcellularLocation>
</comment>
<comment type="similarity">
    <text evidence="3">Belongs to the IL-2 family.</text>
</comment>